<comment type="function">
    <text evidence="3 6">Transfers the 4'-phosphopantetheine moiety from coenzyme A to a Ser of acyl-carrier-protein (PubMed:16709676, PubMed:21697604). Involved in the post-translational modification of Fas-I and the AcpM subunit of Fas-II (PubMed:21697604).</text>
</comment>
<comment type="catalytic activity">
    <reaction evidence="1 6 7">
        <text>apo-[ACP] + CoA = holo-[ACP] + adenosine 3',5'-bisphosphate + H(+)</text>
        <dbReference type="Rhea" id="RHEA:12068"/>
        <dbReference type="Rhea" id="RHEA-COMP:9685"/>
        <dbReference type="Rhea" id="RHEA-COMP:9690"/>
        <dbReference type="ChEBI" id="CHEBI:15378"/>
        <dbReference type="ChEBI" id="CHEBI:29999"/>
        <dbReference type="ChEBI" id="CHEBI:57287"/>
        <dbReference type="ChEBI" id="CHEBI:58343"/>
        <dbReference type="ChEBI" id="CHEBI:64479"/>
        <dbReference type="EC" id="2.7.8.7"/>
    </reaction>
</comment>
<comment type="cofactor">
    <cofactor evidence="1 5">
        <name>Mg(2+)</name>
        <dbReference type="ChEBI" id="CHEBI:18420"/>
    </cofactor>
    <text evidence="5">Binds 2 Mg(2+) per subunit.</text>
</comment>
<comment type="biophysicochemical properties">
    <phDependence>
        <text evidence="6">Optimum pH is between 4.4 and 6.0.</text>
    </phDependence>
</comment>
<comment type="subunit">
    <text evidence="2 5">Homotrimer.</text>
</comment>
<comment type="subcellular location">
    <subcellularLocation>
        <location evidence="1">Cytoplasm</location>
    </subcellularLocation>
</comment>
<comment type="domain">
    <text evidence="6">Apo-AcpS adopts different conformations depending upon the pH conditions of the crystallization solution.</text>
</comment>
<comment type="miscellaneous">
    <text evidence="4">Was identified as a high-confidence drug target.</text>
</comment>
<comment type="similarity">
    <text evidence="1">Belongs to the P-Pant transferase superfamily. AcpS family.</text>
</comment>
<keyword id="KW-0002">3D-structure</keyword>
<keyword id="KW-0963">Cytoplasm</keyword>
<keyword id="KW-0275">Fatty acid biosynthesis</keyword>
<keyword id="KW-0276">Fatty acid metabolism</keyword>
<keyword id="KW-0444">Lipid biosynthesis</keyword>
<keyword id="KW-0443">Lipid metabolism</keyword>
<keyword id="KW-0460">Magnesium</keyword>
<keyword id="KW-0479">Metal-binding</keyword>
<keyword id="KW-1185">Reference proteome</keyword>
<keyword id="KW-0808">Transferase</keyword>
<reference key="1">
    <citation type="journal article" date="1998" name="Nature">
        <title>Deciphering the biology of Mycobacterium tuberculosis from the complete genome sequence.</title>
        <authorList>
            <person name="Cole S.T."/>
            <person name="Brosch R."/>
            <person name="Parkhill J."/>
            <person name="Garnier T."/>
            <person name="Churcher C.M."/>
            <person name="Harris D.E."/>
            <person name="Gordon S.V."/>
            <person name="Eiglmeier K."/>
            <person name="Gas S."/>
            <person name="Barry C.E. III"/>
            <person name="Tekaia F."/>
            <person name="Badcock K."/>
            <person name="Basham D."/>
            <person name="Brown D."/>
            <person name="Chillingworth T."/>
            <person name="Connor R."/>
            <person name="Davies R.M."/>
            <person name="Devlin K."/>
            <person name="Feltwell T."/>
            <person name="Gentles S."/>
            <person name="Hamlin N."/>
            <person name="Holroyd S."/>
            <person name="Hornsby T."/>
            <person name="Jagels K."/>
            <person name="Krogh A."/>
            <person name="McLean J."/>
            <person name="Moule S."/>
            <person name="Murphy L.D."/>
            <person name="Oliver S."/>
            <person name="Osborne J."/>
            <person name="Quail M.A."/>
            <person name="Rajandream M.A."/>
            <person name="Rogers J."/>
            <person name="Rutter S."/>
            <person name="Seeger K."/>
            <person name="Skelton S."/>
            <person name="Squares S."/>
            <person name="Squares R."/>
            <person name="Sulston J.E."/>
            <person name="Taylor K."/>
            <person name="Whitehead S."/>
            <person name="Barrell B.G."/>
        </authorList>
    </citation>
    <scope>NUCLEOTIDE SEQUENCE [LARGE SCALE GENOMIC DNA]</scope>
    <source>
        <strain>ATCC 25618 / H37Rv</strain>
    </source>
</reference>
<reference key="2">
    <citation type="journal article" date="2002" name="Acta Crystallogr. D">
        <title>Expression, purification, crystallization and preliminary X-ray analysis of the acyl carrier protein synthase (acpS) from Mycobacterium tuberculosis.</title>
        <authorList>
            <person name="Chopra S."/>
            <person name="Singh S.K."/>
            <person name="Sati S.P."/>
            <person name="Ranganathan A."/>
            <person name="Sharma A."/>
        </authorList>
    </citation>
    <scope>SUBUNIT</scope>
    <scope>CRYSTALLIZATION</scope>
    <source>
        <strain>H37Rv</strain>
    </source>
</reference>
<reference key="3">
    <citation type="journal article" date="2006" name="Proc. Natl. Acad. Sci. U.S.A.">
        <title>The nonredundant roles of two 4'-phosphopantetheinyl transferases in vital processes of Mycobacteria.</title>
        <authorList>
            <person name="Chalut C."/>
            <person name="Botella L."/>
            <person name="de Sousa-D'Auria C."/>
            <person name="Houssin C."/>
            <person name="Guilhot C."/>
        </authorList>
    </citation>
    <scope>FUNCTION</scope>
    <scope>CATALYTIC ACTIVITY</scope>
</reference>
<reference key="4">
    <citation type="journal article" date="2008" name="BMC Syst. Biol.">
        <title>targetTB: a target identification pipeline for Mycobacterium tuberculosis through an interactome, reactome and genome-scale structural analysis.</title>
        <authorList>
            <person name="Raman K."/>
            <person name="Yeturu K."/>
            <person name="Chandra N."/>
        </authorList>
    </citation>
    <scope>IDENTIFICATION AS A DRUG TARGET [LARGE SCALE ANALYSIS]</scope>
</reference>
<reference key="5">
    <citation type="journal article" date="2011" name="Mol. Cell. Proteomics">
        <title>Proteogenomic analysis of Mycobacterium tuberculosis by high resolution mass spectrometry.</title>
        <authorList>
            <person name="Kelkar D.S."/>
            <person name="Kumar D."/>
            <person name="Kumar P."/>
            <person name="Balakrishnan L."/>
            <person name="Muthusamy B."/>
            <person name="Yadav A.K."/>
            <person name="Shrivastava P."/>
            <person name="Marimuthu A."/>
            <person name="Anand S."/>
            <person name="Sundaram H."/>
            <person name="Kingsbury R."/>
            <person name="Harsha H.C."/>
            <person name="Nair B."/>
            <person name="Prasad T.S."/>
            <person name="Chauhan D.S."/>
            <person name="Katoch K."/>
            <person name="Katoch V.M."/>
            <person name="Kumar P."/>
            <person name="Chaerkady R."/>
            <person name="Ramachandran S."/>
            <person name="Dash D."/>
            <person name="Pandey A."/>
        </authorList>
    </citation>
    <scope>IDENTIFICATION BY MASS SPECTROMETRY [LARGE SCALE ANALYSIS]</scope>
    <source>
        <strain>ATCC 25618 / H37Rv</strain>
    </source>
</reference>
<reference evidence="9" key="6">
    <citation type="journal article" date="2009" name="J. Mol. Biol.">
        <title>Structure-function analysis of the acyl carrier protein synthase (AcpS) from Mycobacterium tuberculosis.</title>
        <authorList>
            <person name="Dym O."/>
            <person name="Albeck S."/>
            <person name="Peleg Y."/>
            <person name="Schwarz A."/>
            <person name="Shakked Z."/>
            <person name="Burstein Y."/>
            <person name="Zimhony O."/>
        </authorList>
    </citation>
    <scope>X-RAY CRYSTALLOGRAPHY (1.95 ANGSTROMS) IN COMPLEX WITH COENZYME A AND MAGNESIUM</scope>
    <scope>COFACTOR</scope>
    <scope>SUBUNIT</scope>
</reference>
<reference evidence="8" key="7">
    <citation type="submission" date="2009-04" db="PDB data bank">
        <title>Structure of the holo-[Acyl-Carrier-Protein] Synthase (ACPS) from Mycobacterium.</title>
        <authorList>
            <person name="Poulsen C."/>
            <person name="Wilmanns M."/>
            <person name="Song Y.H."/>
        </authorList>
    </citation>
    <scope>X-RAY CRYSTALLOGRAPHY (2.25 ANGSTROMS)</scope>
</reference>
<reference evidence="10 11" key="8">
    <citation type="journal article" date="2011" name="Acta Crystallogr. D">
        <title>Mycobacterium tuberculosis acyl carrier protein synthase adopts two different pH-dependent structural conformations.</title>
        <authorList>
            <person name="Gokulan K."/>
            <person name="Aggarwal A."/>
            <person name="Shipman L."/>
            <person name="Besra G.S."/>
            <person name="Sacchettini J.C."/>
        </authorList>
    </citation>
    <scope>X-RAY CRYSTALLOGRAPHY (1.90 ANGSTROMS)</scope>
    <scope>FUNCTION</scope>
    <scope>CATALYTIC ACTIVITY</scope>
    <scope>BIOPHYSICOCHEMICAL PROPERTIES</scope>
    <scope>DOMAIN</scope>
    <source>
        <strain>H37Rv</strain>
    </source>
</reference>
<reference evidence="12" key="9">
    <citation type="submission" date="2012-09" db="PDB data bank">
        <title>Mycobacterium tuberculosis Rv2523c E77A x-ray structure solved with 1.8 angstrom resolution.</title>
        <authorList>
            <person name="Kim H.-B."/>
            <person name="Han G.-W."/>
            <person name="Hung L.-W."/>
            <person name="Terwilliger C.T."/>
            <person name="Kim C.-Y."/>
        </authorList>
    </citation>
    <scope>X-RAY CRYSTALLOGRAPHY (1.80 ANGSTROMS) OF 2-130 OF MUTANT ALA-77</scope>
</reference>
<feature type="chain" id="PRO_0000175675" description="Holo-[acyl-carrier-protein] synthase">
    <location>
        <begin position="1"/>
        <end position="130"/>
    </location>
</feature>
<feature type="binding site" evidence="5">
    <location>
        <position position="9"/>
    </location>
    <ligand>
        <name>Mg(2+)</name>
        <dbReference type="ChEBI" id="CHEBI:18420"/>
        <label>1</label>
    </ligand>
</feature>
<feature type="binding site" evidence="5 9">
    <location>
        <position position="53"/>
    </location>
    <ligand>
        <name>CoA</name>
        <dbReference type="ChEBI" id="CHEBI:57287"/>
    </ligand>
</feature>
<feature type="binding site" evidence="5 9">
    <location>
        <begin position="115"/>
        <end position="116"/>
    </location>
    <ligand>
        <name>CoA</name>
        <dbReference type="ChEBI" id="CHEBI:57287"/>
    </ligand>
</feature>
<feature type="binding site" evidence="5 9">
    <location>
        <position position="116"/>
    </location>
    <ligand>
        <name>Mg(2+)</name>
        <dbReference type="ChEBI" id="CHEBI:18420"/>
        <label>2</label>
    </ligand>
</feature>
<feature type="strand" evidence="14">
    <location>
        <begin position="3"/>
        <end position="12"/>
    </location>
</feature>
<feature type="helix" evidence="14">
    <location>
        <begin position="13"/>
        <end position="20"/>
    </location>
</feature>
<feature type="strand" evidence="14">
    <location>
        <begin position="22"/>
        <end position="25"/>
    </location>
</feature>
<feature type="helix" evidence="14">
    <location>
        <begin position="26"/>
        <end position="29"/>
    </location>
</feature>
<feature type="helix" evidence="14">
    <location>
        <begin position="33"/>
        <end position="39"/>
    </location>
</feature>
<feature type="helix" evidence="14">
    <location>
        <begin position="45"/>
        <end position="66"/>
    </location>
</feature>
<feature type="turn" evidence="14">
    <location>
        <begin position="67"/>
        <end position="70"/>
    </location>
</feature>
<feature type="turn" evidence="13">
    <location>
        <begin position="76"/>
        <end position="78"/>
    </location>
</feature>
<feature type="helix" evidence="14">
    <location>
        <begin position="79"/>
        <end position="82"/>
    </location>
</feature>
<feature type="strand" evidence="14">
    <location>
        <begin position="83"/>
        <end position="87"/>
    </location>
</feature>
<feature type="strand" evidence="14">
    <location>
        <begin position="93"/>
        <end position="97"/>
    </location>
</feature>
<feature type="helix" evidence="14">
    <location>
        <begin position="100"/>
        <end position="104"/>
    </location>
</feature>
<feature type="turn" evidence="14">
    <location>
        <begin position="105"/>
        <end position="107"/>
    </location>
</feature>
<feature type="strand" evidence="14">
    <location>
        <begin position="109"/>
        <end position="117"/>
    </location>
</feature>
<feature type="strand" evidence="14">
    <location>
        <begin position="120"/>
        <end position="128"/>
    </location>
</feature>
<protein>
    <recommendedName>
        <fullName evidence="1">Holo-[acyl-carrier-protein] synthase</fullName>
        <shortName evidence="1">Holo-ACP synthase</shortName>
        <ecNumber evidence="1 6 7">2.7.8.7</ecNumber>
    </recommendedName>
    <alternativeName>
        <fullName evidence="1">4'-phosphopantetheinyl transferase AcpS</fullName>
    </alternativeName>
</protein>
<dbReference type="EC" id="2.7.8.7" evidence="1 6 7"/>
<dbReference type="EMBL" id="AL123456">
    <property type="protein sequence ID" value="CCP45317.1"/>
    <property type="molecule type" value="Genomic_DNA"/>
</dbReference>
<dbReference type="PIR" id="H70870">
    <property type="entry name" value="H70870"/>
</dbReference>
<dbReference type="RefSeq" id="NP_217039.1">
    <property type="nucleotide sequence ID" value="NC_000962.3"/>
</dbReference>
<dbReference type="RefSeq" id="WP_003412952.1">
    <property type="nucleotide sequence ID" value="NZ_NVQJ01000032.1"/>
</dbReference>
<dbReference type="PDB" id="3H7Q">
    <property type="method" value="X-ray"/>
    <property type="resolution" value="2.25 A"/>
    <property type="chains" value="A=1-130"/>
</dbReference>
<dbReference type="PDB" id="3HQJ">
    <property type="method" value="X-ray"/>
    <property type="resolution" value="1.95 A"/>
    <property type="chains" value="A=1-130"/>
</dbReference>
<dbReference type="PDB" id="3NE1">
    <property type="method" value="X-ray"/>
    <property type="resolution" value="2.51 A"/>
    <property type="chains" value="A/B/C=1-130"/>
</dbReference>
<dbReference type="PDB" id="3NE3">
    <property type="method" value="X-ray"/>
    <property type="resolution" value="1.90 A"/>
    <property type="chains" value="B=1-130"/>
</dbReference>
<dbReference type="PDB" id="4HC6">
    <property type="method" value="X-ray"/>
    <property type="resolution" value="1.80 A"/>
    <property type="chains" value="A=2-130"/>
</dbReference>
<dbReference type="PDBsum" id="3H7Q"/>
<dbReference type="PDBsum" id="3HQJ"/>
<dbReference type="PDBsum" id="3NE1"/>
<dbReference type="PDBsum" id="3NE3"/>
<dbReference type="PDBsum" id="4HC6"/>
<dbReference type="SMR" id="P9WQD3"/>
<dbReference type="STRING" id="83332.Rv2523c"/>
<dbReference type="PaxDb" id="83332-Rv2523c"/>
<dbReference type="DNASU" id="888626"/>
<dbReference type="GeneID" id="888626"/>
<dbReference type="KEGG" id="mtu:Rv2523c"/>
<dbReference type="KEGG" id="mtv:RVBD_2523c"/>
<dbReference type="TubercuList" id="Rv2523c"/>
<dbReference type="eggNOG" id="COG0736">
    <property type="taxonomic scope" value="Bacteria"/>
</dbReference>
<dbReference type="InParanoid" id="P9WQD3"/>
<dbReference type="OrthoDB" id="517356at2"/>
<dbReference type="BRENDA" id="2.7.8.7">
    <property type="organism ID" value="3445"/>
</dbReference>
<dbReference type="EvolutionaryTrace" id="P9WQD3"/>
<dbReference type="Proteomes" id="UP000001584">
    <property type="component" value="Chromosome"/>
</dbReference>
<dbReference type="GO" id="GO:0005737">
    <property type="term" value="C:cytoplasm"/>
    <property type="evidence" value="ECO:0007669"/>
    <property type="project" value="UniProtKB-SubCell"/>
</dbReference>
<dbReference type="GO" id="GO:0008897">
    <property type="term" value="F:holo-[acyl-carrier-protein] synthase activity"/>
    <property type="evidence" value="ECO:0007669"/>
    <property type="project" value="UniProtKB-UniRule"/>
</dbReference>
<dbReference type="GO" id="GO:0000287">
    <property type="term" value="F:magnesium ion binding"/>
    <property type="evidence" value="ECO:0007669"/>
    <property type="project" value="UniProtKB-UniRule"/>
</dbReference>
<dbReference type="GO" id="GO:0006633">
    <property type="term" value="P:fatty acid biosynthetic process"/>
    <property type="evidence" value="ECO:0007669"/>
    <property type="project" value="UniProtKB-UniRule"/>
</dbReference>
<dbReference type="Gene3D" id="3.90.470.20">
    <property type="entry name" value="4'-phosphopantetheinyl transferase domain"/>
    <property type="match status" value="1"/>
</dbReference>
<dbReference type="HAMAP" id="MF_00101">
    <property type="entry name" value="AcpS"/>
    <property type="match status" value="1"/>
</dbReference>
<dbReference type="InterPro" id="IPR008278">
    <property type="entry name" value="4-PPantetheinyl_Trfase_dom"/>
</dbReference>
<dbReference type="InterPro" id="IPR037143">
    <property type="entry name" value="4-PPantetheinyl_Trfase_dom_sf"/>
</dbReference>
<dbReference type="InterPro" id="IPR002582">
    <property type="entry name" value="ACPS"/>
</dbReference>
<dbReference type="InterPro" id="IPR004568">
    <property type="entry name" value="Ppantetheine-prot_Trfase_dom"/>
</dbReference>
<dbReference type="NCBIfam" id="TIGR00556">
    <property type="entry name" value="pantethn_trn"/>
    <property type="match status" value="1"/>
</dbReference>
<dbReference type="NCBIfam" id="NF000831">
    <property type="entry name" value="PRK00070.3-1"/>
    <property type="match status" value="1"/>
</dbReference>
<dbReference type="Pfam" id="PF01648">
    <property type="entry name" value="ACPS"/>
    <property type="match status" value="1"/>
</dbReference>
<dbReference type="SUPFAM" id="SSF56214">
    <property type="entry name" value="4'-phosphopantetheinyl transferase"/>
    <property type="match status" value="1"/>
</dbReference>
<organism>
    <name type="scientific">Mycobacterium tuberculosis (strain ATCC 25618 / H37Rv)</name>
    <dbReference type="NCBI Taxonomy" id="83332"/>
    <lineage>
        <taxon>Bacteria</taxon>
        <taxon>Bacillati</taxon>
        <taxon>Actinomycetota</taxon>
        <taxon>Actinomycetes</taxon>
        <taxon>Mycobacteriales</taxon>
        <taxon>Mycobacteriaceae</taxon>
        <taxon>Mycobacterium</taxon>
        <taxon>Mycobacterium tuberculosis complex</taxon>
    </lineage>
</organism>
<proteinExistence type="evidence at protein level"/>
<evidence type="ECO:0000255" key="1">
    <source>
        <dbReference type="HAMAP-Rule" id="MF_00101"/>
    </source>
</evidence>
<evidence type="ECO:0000269" key="2">
    <source>
    </source>
</evidence>
<evidence type="ECO:0000269" key="3">
    <source>
    </source>
</evidence>
<evidence type="ECO:0000269" key="4">
    <source>
    </source>
</evidence>
<evidence type="ECO:0000269" key="5">
    <source>
    </source>
</evidence>
<evidence type="ECO:0000269" key="6">
    <source>
    </source>
</evidence>
<evidence type="ECO:0000305" key="7">
    <source>
    </source>
</evidence>
<evidence type="ECO:0007744" key="8">
    <source>
        <dbReference type="PDB" id="3H7Q"/>
    </source>
</evidence>
<evidence type="ECO:0007744" key="9">
    <source>
        <dbReference type="PDB" id="3HQJ"/>
    </source>
</evidence>
<evidence type="ECO:0007744" key="10">
    <source>
        <dbReference type="PDB" id="3NE1"/>
    </source>
</evidence>
<evidence type="ECO:0007744" key="11">
    <source>
        <dbReference type="PDB" id="3NE3"/>
    </source>
</evidence>
<evidence type="ECO:0007744" key="12">
    <source>
        <dbReference type="PDB" id="4HC6"/>
    </source>
</evidence>
<evidence type="ECO:0007829" key="13">
    <source>
        <dbReference type="PDB" id="3NE3"/>
    </source>
</evidence>
<evidence type="ECO:0007829" key="14">
    <source>
        <dbReference type="PDB" id="4HC6"/>
    </source>
</evidence>
<accession>P9WQD3</accession>
<accession>L0TCS3</accession>
<accession>O53228</accession>
<accession>P0A4W8</accession>
<name>ACPS_MYCTU</name>
<sequence>MGIVGVGIDLVSIPDFAEQVDQPGTVFAETFTPGERRDASDKSSSAARHLAARWAAKEAVIKAWSGSRFAQRPVLPEDIHRDIEVVTDMWGRPRVRLTGAIAEYLADVTIHVSLTHEGDTAAAVAILEAP</sequence>
<gene>
    <name evidence="1" type="primary">acpS</name>
    <name type="ordered locus">Rv2523c</name>
    <name type="ORF">MTV009.08c</name>
</gene>